<feature type="chain" id="PRO_0000442432" description="Probable sulfite/organosulfonate exporter TauE">
    <location>
        <begin position="1"/>
        <end position="256"/>
    </location>
</feature>
<feature type="transmembrane region" description="Helical" evidence="1">
    <location>
        <begin position="5"/>
        <end position="25"/>
    </location>
</feature>
<feature type="transmembrane region" description="Helical" evidence="1">
    <location>
        <begin position="33"/>
        <end position="53"/>
    </location>
</feature>
<feature type="transmembrane region" description="Helical" evidence="1">
    <location>
        <begin position="76"/>
        <end position="96"/>
    </location>
</feature>
<feature type="transmembrane region" description="Helical" evidence="1">
    <location>
        <begin position="103"/>
        <end position="123"/>
    </location>
</feature>
<feature type="transmembrane region" description="Helical" evidence="1">
    <location>
        <begin position="142"/>
        <end position="162"/>
    </location>
</feature>
<feature type="transmembrane region" description="Helical" evidence="1">
    <location>
        <begin position="172"/>
        <end position="190"/>
    </location>
</feature>
<feature type="transmembrane region" description="Helical" evidence="1">
    <location>
        <begin position="199"/>
        <end position="219"/>
    </location>
</feature>
<feature type="transmembrane region" description="Helical" evidence="1">
    <location>
        <begin position="236"/>
        <end position="256"/>
    </location>
</feature>
<evidence type="ECO:0000255" key="1"/>
<evidence type="ECO:0000269" key="2">
    <source>
    </source>
</evidence>
<evidence type="ECO:0000269" key="3">
    <source>
    </source>
</evidence>
<evidence type="ECO:0000303" key="4">
    <source>
    </source>
</evidence>
<evidence type="ECO:0000303" key="5">
    <source>
    </source>
</evidence>
<evidence type="ECO:0000305" key="6"/>
<evidence type="ECO:0000312" key="7">
    <source>
        <dbReference type="EMBL" id="CAJ96654.1"/>
    </source>
</evidence>
<comment type="function">
    <text evidence="2 3">Could be a sulfite/organosulfonate exporter with a wide substrate range, including 3-sulfolactate and 3-sulfopyruvate.</text>
</comment>
<comment type="subcellular location">
    <subcellularLocation>
        <location evidence="6">Cell inner membrane</location>
        <topology evidence="1">Multi-pass membrane protein</topology>
    </subcellularLocation>
</comment>
<comment type="induction">
    <text evidence="2">Induced by the C2 sulfonates taurine, isethionate and sulfoacetate.</text>
</comment>
<comment type="similarity">
    <text evidence="6">Belongs to the 4-toluene sulfonate uptake permease (TSUP) (TC 2.A.102) family.</text>
</comment>
<sequence>MKAELLLPLLGLQALLGAGTYFQTVTGFGLGMIVMGVTSGLGLAPVATVAAVVSLVTLANSACALPGKLQHIDWRAVAAAAIGILPSVVVGVLVLEYLSSSAATLLQLLLGAVILYGGLSAALKPAPLAQRSGDGTFFVSGVFGGLLSGMFGVSGPPLIFQFYRQPMKPVEIRCALILVFTVTSTVRTLFSAWQGQLDAAVCVQAAIAVPVVVIATLLGRRFPPPFSPATTRRVAFGVLIGIGASLMLPAISAWVL</sequence>
<reference key="1">
    <citation type="journal article" date="2006" name="Nat. Biotechnol.">
        <title>Genome sequence of the bioplastic-producing 'Knallgas' bacterium Ralstonia eutropha H16.</title>
        <authorList>
            <person name="Pohlmann A."/>
            <person name="Fricke W.F."/>
            <person name="Reinecke F."/>
            <person name="Kusian B."/>
            <person name="Liesegang H."/>
            <person name="Cramm R."/>
            <person name="Eitinger T."/>
            <person name="Ewering C."/>
            <person name="Poetter M."/>
            <person name="Schwartz E."/>
            <person name="Strittmatter A."/>
            <person name="Voss I."/>
            <person name="Gottschalk G."/>
            <person name="Steinbuechel A."/>
            <person name="Friedrich B."/>
            <person name="Bowien B."/>
        </authorList>
    </citation>
    <scope>NUCLEOTIDE SEQUENCE [LARGE SCALE GENOMIC DNA]</scope>
    <source>
        <strain>ATCC 17699 / DSM 428 / KCTC 22496 / NCIMB 10442 / H16 / Stanier 337</strain>
    </source>
</reference>
<reference key="2">
    <citation type="journal article" date="2007" name="Microbiology">
        <title>The DUF81 protein TauE in Cupriavidus necator H16, a sulfite exporter in the metabolism of C2 sulfonates.</title>
        <authorList>
            <person name="Weinitschke S."/>
            <person name="Denger K."/>
            <person name="Cook A.M."/>
            <person name="Smits T.H."/>
        </authorList>
    </citation>
    <scope>FUNCTION</scope>
    <scope>INDUCTION</scope>
    <source>
        <strain>ATCC 17699 / DSM 428 / KCTC 22496 / NCIMB 10442 / H16 / Stanier 337</strain>
    </source>
</reference>
<reference key="3">
    <citation type="journal article" date="2012" name="Arch. Microbiol.">
        <title>(R)-Cysteate-nitrogen assimilation by Cupriavidus necator H16 with excretion of 3-sulfolactate: a patchwork pathway.</title>
        <authorList>
            <person name="Mayer J."/>
            <person name="Denger K."/>
            <person name="Hollemeyer K."/>
            <person name="Schleheck D."/>
            <person name="Cook A.M."/>
        </authorList>
    </citation>
    <scope>FUNCTION</scope>
    <source>
        <strain>ATCC 17699 / DSM 428 / KCTC 22496 / NCIMB 10442 / H16 / Stanier 337</strain>
    </source>
</reference>
<accession>Q0K020</accession>
<gene>
    <name evidence="4" type="primary">tauE</name>
    <name evidence="7" type="ordered locus">H16_B1872</name>
</gene>
<protein>
    <recommendedName>
        <fullName evidence="5">Probable sulfite/organosulfonate exporter TauE</fullName>
    </recommendedName>
</protein>
<proteinExistence type="evidence at transcript level"/>
<name>TAUE_CUPNH</name>
<dbReference type="EMBL" id="AM260480">
    <property type="protein sequence ID" value="CAJ96654.1"/>
    <property type="molecule type" value="Genomic_DNA"/>
</dbReference>
<dbReference type="RefSeq" id="WP_011617520.1">
    <property type="nucleotide sequence ID" value="NC_008314.1"/>
</dbReference>
<dbReference type="STRING" id="381666.H16_B1872"/>
<dbReference type="TCDB" id="2.A.102.2.1">
    <property type="family name" value="the 4-toluene sulfonate uptake permease (tsup) family"/>
</dbReference>
<dbReference type="KEGG" id="reh:H16_B1872"/>
<dbReference type="eggNOG" id="COG0730">
    <property type="taxonomic scope" value="Bacteria"/>
</dbReference>
<dbReference type="HOGENOM" id="CLU_054750_3_0_4"/>
<dbReference type="OrthoDB" id="7029178at2"/>
<dbReference type="Proteomes" id="UP000008210">
    <property type="component" value="Chromosome 2"/>
</dbReference>
<dbReference type="GO" id="GO:0005886">
    <property type="term" value="C:plasma membrane"/>
    <property type="evidence" value="ECO:0007669"/>
    <property type="project" value="UniProtKB-SubCell"/>
</dbReference>
<dbReference type="InterPro" id="IPR002781">
    <property type="entry name" value="TM_pro_TauE-like"/>
</dbReference>
<dbReference type="InterPro" id="IPR052017">
    <property type="entry name" value="TSUP"/>
</dbReference>
<dbReference type="PANTHER" id="PTHR30269:SF37">
    <property type="entry name" value="MEMBRANE TRANSPORTER PROTEIN"/>
    <property type="match status" value="1"/>
</dbReference>
<dbReference type="PANTHER" id="PTHR30269">
    <property type="entry name" value="TRANSMEMBRANE PROTEIN YFCA"/>
    <property type="match status" value="1"/>
</dbReference>
<dbReference type="Pfam" id="PF01925">
    <property type="entry name" value="TauE"/>
    <property type="match status" value="1"/>
</dbReference>
<keyword id="KW-0997">Cell inner membrane</keyword>
<keyword id="KW-1003">Cell membrane</keyword>
<keyword id="KW-0472">Membrane</keyword>
<keyword id="KW-1185">Reference proteome</keyword>
<keyword id="KW-0812">Transmembrane</keyword>
<keyword id="KW-1133">Transmembrane helix</keyword>
<keyword id="KW-0813">Transport</keyword>
<organism>
    <name type="scientific">Cupriavidus necator (strain ATCC 17699 / DSM 428 / KCTC 22496 / NCIMB 10442 / H16 / Stanier 337)</name>
    <name type="common">Ralstonia eutropha</name>
    <dbReference type="NCBI Taxonomy" id="381666"/>
    <lineage>
        <taxon>Bacteria</taxon>
        <taxon>Pseudomonadati</taxon>
        <taxon>Pseudomonadota</taxon>
        <taxon>Betaproteobacteria</taxon>
        <taxon>Burkholderiales</taxon>
        <taxon>Burkholderiaceae</taxon>
        <taxon>Cupriavidus</taxon>
    </lineage>
</organism>